<reference key="1">
    <citation type="submission" date="2008-02" db="EMBL/GenBank/DDBJ databases">
        <title>Complete sequence of Synechococcus sp. PCC 7002.</title>
        <authorList>
            <person name="Li T."/>
            <person name="Zhao J."/>
            <person name="Zhao C."/>
            <person name="Liu Z."/>
            <person name="Zhao F."/>
            <person name="Marquardt J."/>
            <person name="Nomura C.T."/>
            <person name="Persson S."/>
            <person name="Detter J.C."/>
            <person name="Richardson P.M."/>
            <person name="Lanz C."/>
            <person name="Schuster S.C."/>
            <person name="Wang J."/>
            <person name="Li S."/>
            <person name="Huang X."/>
            <person name="Cai T."/>
            <person name="Yu Z."/>
            <person name="Luo J."/>
            <person name="Zhao J."/>
            <person name="Bryant D.A."/>
        </authorList>
    </citation>
    <scope>NUCLEOTIDE SEQUENCE [LARGE SCALE GENOMIC DNA]</scope>
    <source>
        <strain>ATCC 27264 / PCC 7002 / PR-6</strain>
    </source>
</reference>
<keyword id="KW-0067">ATP-binding</keyword>
<keyword id="KW-0963">Cytoplasm</keyword>
<keyword id="KW-0235">DNA replication</keyword>
<keyword id="KW-0238">DNA-binding</keyword>
<keyword id="KW-0446">Lipid-binding</keyword>
<keyword id="KW-0547">Nucleotide-binding</keyword>
<keyword id="KW-1185">Reference proteome</keyword>
<organism>
    <name type="scientific">Picosynechococcus sp. (strain ATCC 27264 / PCC 7002 / PR-6)</name>
    <name type="common">Agmenellum quadruplicatum</name>
    <dbReference type="NCBI Taxonomy" id="32049"/>
    <lineage>
        <taxon>Bacteria</taxon>
        <taxon>Bacillati</taxon>
        <taxon>Cyanobacteriota</taxon>
        <taxon>Cyanophyceae</taxon>
        <taxon>Oscillatoriophycideae</taxon>
        <taxon>Chroococcales</taxon>
        <taxon>Geminocystaceae</taxon>
        <taxon>Picosynechococcus</taxon>
    </lineage>
</organism>
<dbReference type="EMBL" id="CP000951">
    <property type="protein sequence ID" value="ACA98019.1"/>
    <property type="molecule type" value="Genomic_DNA"/>
</dbReference>
<dbReference type="RefSeq" id="WP_012305643.1">
    <property type="nucleotide sequence ID" value="NC_010475.1"/>
</dbReference>
<dbReference type="SMR" id="B1XKQ0"/>
<dbReference type="STRING" id="32049.SYNPCC7002_A0001"/>
<dbReference type="KEGG" id="syp:SYNPCC7002_A0001"/>
<dbReference type="eggNOG" id="COG0593">
    <property type="taxonomic scope" value="Bacteria"/>
</dbReference>
<dbReference type="HOGENOM" id="CLU_026910_3_1_3"/>
<dbReference type="Proteomes" id="UP000001688">
    <property type="component" value="Chromosome"/>
</dbReference>
<dbReference type="GO" id="GO:0005737">
    <property type="term" value="C:cytoplasm"/>
    <property type="evidence" value="ECO:0007669"/>
    <property type="project" value="UniProtKB-SubCell"/>
</dbReference>
<dbReference type="GO" id="GO:0005886">
    <property type="term" value="C:plasma membrane"/>
    <property type="evidence" value="ECO:0007669"/>
    <property type="project" value="TreeGrafter"/>
</dbReference>
<dbReference type="GO" id="GO:0005524">
    <property type="term" value="F:ATP binding"/>
    <property type="evidence" value="ECO:0007669"/>
    <property type="project" value="UniProtKB-UniRule"/>
</dbReference>
<dbReference type="GO" id="GO:0016887">
    <property type="term" value="F:ATP hydrolysis activity"/>
    <property type="evidence" value="ECO:0007669"/>
    <property type="project" value="InterPro"/>
</dbReference>
<dbReference type="GO" id="GO:0003688">
    <property type="term" value="F:DNA replication origin binding"/>
    <property type="evidence" value="ECO:0007669"/>
    <property type="project" value="UniProtKB-UniRule"/>
</dbReference>
<dbReference type="GO" id="GO:0008289">
    <property type="term" value="F:lipid binding"/>
    <property type="evidence" value="ECO:0007669"/>
    <property type="project" value="UniProtKB-KW"/>
</dbReference>
<dbReference type="GO" id="GO:0006270">
    <property type="term" value="P:DNA replication initiation"/>
    <property type="evidence" value="ECO:0007669"/>
    <property type="project" value="UniProtKB-UniRule"/>
</dbReference>
<dbReference type="GO" id="GO:0006275">
    <property type="term" value="P:regulation of DNA replication"/>
    <property type="evidence" value="ECO:0007669"/>
    <property type="project" value="UniProtKB-UniRule"/>
</dbReference>
<dbReference type="CDD" id="cd00009">
    <property type="entry name" value="AAA"/>
    <property type="match status" value="1"/>
</dbReference>
<dbReference type="CDD" id="cd06571">
    <property type="entry name" value="Bac_DnaA_C"/>
    <property type="match status" value="1"/>
</dbReference>
<dbReference type="FunFam" id="3.40.50.300:FF:000668">
    <property type="entry name" value="Chromosomal replication initiator protein DnaA"/>
    <property type="match status" value="1"/>
</dbReference>
<dbReference type="Gene3D" id="1.10.1750.10">
    <property type="match status" value="1"/>
</dbReference>
<dbReference type="Gene3D" id="1.10.8.60">
    <property type="match status" value="1"/>
</dbReference>
<dbReference type="Gene3D" id="3.30.300.180">
    <property type="match status" value="1"/>
</dbReference>
<dbReference type="Gene3D" id="3.40.50.300">
    <property type="entry name" value="P-loop containing nucleotide triphosphate hydrolases"/>
    <property type="match status" value="1"/>
</dbReference>
<dbReference type="HAMAP" id="MF_00377">
    <property type="entry name" value="DnaA_bact"/>
    <property type="match status" value="1"/>
</dbReference>
<dbReference type="InterPro" id="IPR003593">
    <property type="entry name" value="AAA+_ATPase"/>
</dbReference>
<dbReference type="InterPro" id="IPR001957">
    <property type="entry name" value="Chromosome_initiator_DnaA"/>
</dbReference>
<dbReference type="InterPro" id="IPR020591">
    <property type="entry name" value="Chromosome_initiator_DnaA-like"/>
</dbReference>
<dbReference type="InterPro" id="IPR018312">
    <property type="entry name" value="Chromosome_initiator_DnaA_CS"/>
</dbReference>
<dbReference type="InterPro" id="IPR013159">
    <property type="entry name" value="DnaA_C"/>
</dbReference>
<dbReference type="InterPro" id="IPR013317">
    <property type="entry name" value="DnaA_dom"/>
</dbReference>
<dbReference type="InterPro" id="IPR024633">
    <property type="entry name" value="DnaA_N_dom"/>
</dbReference>
<dbReference type="InterPro" id="IPR038454">
    <property type="entry name" value="DnaA_N_sf"/>
</dbReference>
<dbReference type="InterPro" id="IPR027417">
    <property type="entry name" value="P-loop_NTPase"/>
</dbReference>
<dbReference type="InterPro" id="IPR010921">
    <property type="entry name" value="Trp_repressor/repl_initiator"/>
</dbReference>
<dbReference type="NCBIfam" id="TIGR00362">
    <property type="entry name" value="DnaA"/>
    <property type="match status" value="1"/>
</dbReference>
<dbReference type="PANTHER" id="PTHR30050">
    <property type="entry name" value="CHROMOSOMAL REPLICATION INITIATOR PROTEIN DNAA"/>
    <property type="match status" value="1"/>
</dbReference>
<dbReference type="PANTHER" id="PTHR30050:SF2">
    <property type="entry name" value="CHROMOSOMAL REPLICATION INITIATOR PROTEIN DNAA"/>
    <property type="match status" value="1"/>
</dbReference>
<dbReference type="Pfam" id="PF00308">
    <property type="entry name" value="Bac_DnaA"/>
    <property type="match status" value="1"/>
</dbReference>
<dbReference type="Pfam" id="PF08299">
    <property type="entry name" value="Bac_DnaA_C"/>
    <property type="match status" value="1"/>
</dbReference>
<dbReference type="Pfam" id="PF11638">
    <property type="entry name" value="DnaA_N"/>
    <property type="match status" value="1"/>
</dbReference>
<dbReference type="PRINTS" id="PR00051">
    <property type="entry name" value="DNAA"/>
</dbReference>
<dbReference type="SMART" id="SM00382">
    <property type="entry name" value="AAA"/>
    <property type="match status" value="1"/>
</dbReference>
<dbReference type="SMART" id="SM00760">
    <property type="entry name" value="Bac_DnaA_C"/>
    <property type="match status" value="1"/>
</dbReference>
<dbReference type="SUPFAM" id="SSF52540">
    <property type="entry name" value="P-loop containing nucleoside triphosphate hydrolases"/>
    <property type="match status" value="1"/>
</dbReference>
<dbReference type="SUPFAM" id="SSF48295">
    <property type="entry name" value="TrpR-like"/>
    <property type="match status" value="1"/>
</dbReference>
<dbReference type="PROSITE" id="PS01008">
    <property type="entry name" value="DNAA"/>
    <property type="match status" value="1"/>
</dbReference>
<feature type="chain" id="PRO_1000122027" description="Chromosomal replication initiator protein DnaA">
    <location>
        <begin position="1"/>
        <end position="449"/>
    </location>
</feature>
<feature type="region of interest" description="Domain I, interacts with DnaA modulators" evidence="1">
    <location>
        <begin position="1"/>
        <end position="73"/>
    </location>
</feature>
<feature type="region of interest" description="Domain II" evidence="1">
    <location>
        <begin position="73"/>
        <end position="109"/>
    </location>
</feature>
<feature type="region of interest" description="Disordered" evidence="2">
    <location>
        <begin position="90"/>
        <end position="110"/>
    </location>
</feature>
<feature type="region of interest" description="Domain III, AAA+ region" evidence="1">
    <location>
        <begin position="110"/>
        <end position="326"/>
    </location>
</feature>
<feature type="region of interest" description="Domain IV, binds dsDNA" evidence="1">
    <location>
        <begin position="327"/>
        <end position="449"/>
    </location>
</feature>
<feature type="compositionally biased region" description="Polar residues" evidence="2">
    <location>
        <begin position="90"/>
        <end position="103"/>
    </location>
</feature>
<feature type="binding site" evidence="1">
    <location>
        <position position="154"/>
    </location>
    <ligand>
        <name>ATP</name>
        <dbReference type="ChEBI" id="CHEBI:30616"/>
    </ligand>
</feature>
<feature type="binding site" evidence="1">
    <location>
        <position position="156"/>
    </location>
    <ligand>
        <name>ATP</name>
        <dbReference type="ChEBI" id="CHEBI:30616"/>
    </ligand>
</feature>
<feature type="binding site" evidence="1">
    <location>
        <position position="157"/>
    </location>
    <ligand>
        <name>ATP</name>
        <dbReference type="ChEBI" id="CHEBI:30616"/>
    </ligand>
</feature>
<feature type="binding site" evidence="1">
    <location>
        <position position="158"/>
    </location>
    <ligand>
        <name>ATP</name>
        <dbReference type="ChEBI" id="CHEBI:30616"/>
    </ligand>
</feature>
<sequence>MTQNPQWLWQEVLTKLEQQLSRPTYETWIQPTAIQQWREDEIVLCAPNAFVLNHIQKYYGALITETIAELLQQPVKVRLTSPEGNTLAATQSFYSSRSGQSTRPGKKTPELNSKYTFSRFVVGPTNRMAHAAALAVAESPGRDFNPLVLCGGVGLGKTHLMQAIGHYRLDTQPDAKIFYVSTEQFTNDLIVAIRKDSLQTFREHYRTADILLVDDIQFIEGKEYTQEEFFYTFNTLHEAGKQIVLASDRPPHQIPGLQQRLSSRFSMGLIADIQPPDLETRMAILQKKAEAENLNLSRSVIEYIATHYTANIRELEGALLRAVTHIAISGLPMTVENLAPILNPTVEYAPAAPDVILQIAAEATGVSIEDLKGASRRREISTARQIAMYLMRQHTDLSLPRIGELFGGKDHTTVMYSCDKIGQLLTKNQKISQLVSQISDRINHHHQNL</sequence>
<name>DNAA_PICP2</name>
<proteinExistence type="inferred from homology"/>
<gene>
    <name evidence="1" type="primary">dnaA</name>
    <name type="ordered locus">SYNPCC7002_A0001</name>
</gene>
<accession>B1XKQ0</accession>
<protein>
    <recommendedName>
        <fullName evidence="1">Chromosomal replication initiator protein DnaA</fullName>
    </recommendedName>
</protein>
<comment type="function">
    <text evidence="1">Plays an essential role in the initiation and regulation of chromosomal replication. ATP-DnaA binds to the origin of replication (oriC) to initiate formation of the DNA replication initiation complex once per cell cycle. Binds the DnaA box (a 9 base pair repeat at the origin) and separates the double-stranded (ds)DNA. Forms a right-handed helical filament on oriC DNA; dsDNA binds to the exterior of the filament while single-stranded (ss)DNA is stabiized in the filament's interior. The ATP-DnaA-oriC complex binds and stabilizes one strand of the AT-rich DNA unwinding element (DUE), permitting loading of DNA polymerase. After initiation quickly degrades to an ADP-DnaA complex that is not apt for DNA replication. Binds acidic phospholipids.</text>
</comment>
<comment type="subunit">
    <text evidence="1">Oligomerizes as a right-handed, spiral filament on DNA at oriC.</text>
</comment>
<comment type="subcellular location">
    <subcellularLocation>
        <location evidence="1">Cytoplasm</location>
    </subcellularLocation>
</comment>
<comment type="domain">
    <text evidence="1">Domain I is involved in oligomerization and binding regulators, domain II is flexibile and of varying length in different bacteria, domain III forms the AAA+ region, while domain IV binds dsDNA.</text>
</comment>
<comment type="similarity">
    <text evidence="1">Belongs to the DnaA family.</text>
</comment>
<evidence type="ECO:0000255" key="1">
    <source>
        <dbReference type="HAMAP-Rule" id="MF_00377"/>
    </source>
</evidence>
<evidence type="ECO:0000256" key="2">
    <source>
        <dbReference type="SAM" id="MobiDB-lite"/>
    </source>
</evidence>